<comment type="subcellular location">
    <subcellularLocation>
        <location evidence="2">Cell membrane</location>
        <topology evidence="2">Multi-pass membrane protein</topology>
    </subcellularLocation>
</comment>
<organism>
    <name type="scientific">Mycoplasma pneumoniae (strain ATCC 29342 / M129 / Subtype 1)</name>
    <name type="common">Mycoplasmoides pneumoniae</name>
    <dbReference type="NCBI Taxonomy" id="272634"/>
    <lineage>
        <taxon>Bacteria</taxon>
        <taxon>Bacillati</taxon>
        <taxon>Mycoplasmatota</taxon>
        <taxon>Mycoplasmoidales</taxon>
        <taxon>Mycoplasmoidaceae</taxon>
        <taxon>Mycoplasmoides</taxon>
    </lineage>
</organism>
<dbReference type="EMBL" id="U00089">
    <property type="protein sequence ID" value="AAB96319.1"/>
    <property type="molecule type" value="Genomic_DNA"/>
</dbReference>
<dbReference type="PIR" id="S73997">
    <property type="entry name" value="S73997"/>
</dbReference>
<dbReference type="RefSeq" id="NP_109848.1">
    <property type="nucleotide sequence ID" value="NC_000912.1"/>
</dbReference>
<dbReference type="RefSeq" id="WP_010874517.1">
    <property type="nucleotide sequence ID" value="NZ_OU342337.1"/>
</dbReference>
<dbReference type="SMR" id="P75585"/>
<dbReference type="STRING" id="272634.MPN_160"/>
<dbReference type="EnsemblBacteria" id="AAB96319">
    <property type="protein sequence ID" value="AAB96319"/>
    <property type="gene ID" value="MPN_160"/>
</dbReference>
<dbReference type="KEGG" id="mpn:MPN_160"/>
<dbReference type="PATRIC" id="fig|272634.6.peg.178"/>
<dbReference type="HOGENOM" id="CLU_737345_0_0_14"/>
<dbReference type="OrthoDB" id="400642at2"/>
<dbReference type="BioCyc" id="MPNE272634:G1GJ3-269-MONOMER"/>
<dbReference type="Proteomes" id="UP000000808">
    <property type="component" value="Chromosome"/>
</dbReference>
<dbReference type="GO" id="GO:0005886">
    <property type="term" value="C:plasma membrane"/>
    <property type="evidence" value="ECO:0007669"/>
    <property type="project" value="UniProtKB-SubCell"/>
</dbReference>
<dbReference type="Gene3D" id="1.10.1760.20">
    <property type="match status" value="1"/>
</dbReference>
<dbReference type="InterPro" id="IPR055000">
    <property type="entry name" value="MPN160_family"/>
</dbReference>
<dbReference type="NCBIfam" id="NF045740">
    <property type="entry name" value="MPN160"/>
    <property type="match status" value="1"/>
</dbReference>
<feature type="chain" id="PRO_0000210443" description="Uncharacterized protein MG147 homolog">
    <location>
        <begin position="1"/>
        <end position="377"/>
    </location>
</feature>
<feature type="transmembrane region" description="Helical" evidence="1">
    <location>
        <begin position="21"/>
        <end position="41"/>
    </location>
</feature>
<feature type="transmembrane region" description="Helical" evidence="1">
    <location>
        <begin position="66"/>
        <end position="86"/>
    </location>
</feature>
<feature type="transmembrane region" description="Helical" evidence="1">
    <location>
        <begin position="163"/>
        <end position="183"/>
    </location>
</feature>
<feature type="transmembrane region" description="Helical" evidence="1">
    <location>
        <begin position="197"/>
        <end position="217"/>
    </location>
</feature>
<feature type="transmembrane region" description="Helical" evidence="1">
    <location>
        <begin position="236"/>
        <end position="256"/>
    </location>
</feature>
<feature type="transmembrane region" description="Helical" evidence="1">
    <location>
        <begin position="292"/>
        <end position="312"/>
    </location>
</feature>
<feature type="transmembrane region" description="Helical" evidence="1">
    <location>
        <begin position="339"/>
        <end position="359"/>
    </location>
</feature>
<proteinExistence type="predicted"/>
<gene>
    <name type="ordered locus">MPN_160</name>
    <name type="ORF">MP671</name>
    <name type="ORF">VXpSPT7_orf377</name>
</gene>
<protein>
    <recommendedName>
        <fullName>Uncharacterized protein MG147 homolog</fullName>
    </recommendedName>
</protein>
<accession>P75585</accession>
<reference key="1">
    <citation type="journal article" date="1996" name="Nucleic Acids Res.">
        <title>Complete sequence analysis of the genome of the bacterium Mycoplasma pneumoniae.</title>
        <authorList>
            <person name="Himmelreich R."/>
            <person name="Hilbert H."/>
            <person name="Plagens H."/>
            <person name="Pirkl E."/>
            <person name="Li B.-C."/>
            <person name="Herrmann R."/>
        </authorList>
    </citation>
    <scope>NUCLEOTIDE SEQUENCE [LARGE SCALE GENOMIC DNA]</scope>
    <source>
        <strain>ATCC 29342 / M129 / Subtype 1</strain>
    </source>
</reference>
<keyword id="KW-1003">Cell membrane</keyword>
<keyword id="KW-0472">Membrane</keyword>
<keyword id="KW-1185">Reference proteome</keyword>
<keyword id="KW-0812">Transmembrane</keyword>
<keyword id="KW-1133">Transmembrane helix</keyword>
<name>Y160_MYCPN</name>
<evidence type="ECO:0000255" key="1"/>
<evidence type="ECO:0000305" key="2"/>
<sequence>MLWTRALILELKTNKQSRLLWLLAIPLLISLTLLTYGLVLFSSSGRIDHGDHFHLRERFVLTTEELVTFVVASVVFALTVALFGLGCWKLLQGPKVDRTNIKLANSNPAPQAVVLQADCDHFQVGDHCVFSAEKQHFKQQFKQDFLGKSKFSFRNELYRFCLIGVLISLNLALSMVEIPGIVLPWGSSIQFRFFNTAILFIAIRFVGLLSTSLIAIITPWIHLLLHPVHTPISTVFYMGNDLVVLWIFYFFYYHIFKAEVKQTTTVVNNKEFSQLVNTHKTKVAKALALIPVNLICGFIEGLGFYVGYFLILGKFGSVGHKIFYDSQANRDLINSANVIYFLLTTTTIFSLKYLFELLFFYSVEKGILNISRHFGLY</sequence>